<evidence type="ECO:0000255" key="1">
    <source>
        <dbReference type="HAMAP-Rule" id="MF_03012"/>
    </source>
</evidence>
<evidence type="ECO:0000255" key="2">
    <source>
        <dbReference type="PROSITE-ProRule" id="PRU01185"/>
    </source>
</evidence>
<evidence type="ECO:0000269" key="3">
    <source>
    </source>
</evidence>
<keyword id="KW-0963">Cytoplasm</keyword>
<keyword id="KW-0333">Golgi apparatus</keyword>
<keyword id="KW-0396">Initiation factor</keyword>
<keyword id="KW-0648">Protein biosynthesis</keyword>
<keyword id="KW-1185">Reference proteome</keyword>
<feature type="chain" id="PRO_0000308202" description="Eukaryotic translation initiation factor 3 subunit M">
    <location>
        <begin position="1"/>
        <end position="387"/>
    </location>
</feature>
<feature type="domain" description="PCI" evidence="2">
    <location>
        <begin position="181"/>
        <end position="340"/>
    </location>
</feature>
<gene>
    <name evidence="1" type="primary">eIF3m</name>
    <name evidence="1" type="synonym">Tango7</name>
    <name type="ORF">CG8309</name>
</gene>
<sequence length="387" mass="44087">MTSHPVFIDLSLDEQVQELRKYFKKLGAEISSEKSNKGVEDDLHKIIGVCDVCFKDGEPSQIDGILNSIVSIMITIPLDRGENIVLAYCEKMTKAPNLPLGKVCLQSLWRLFNNLDTASPLRYHVYYHLVQVAKQCEQVLEVFSGVDQLKSQFANCPPSSEQMQKLYRLLHDVTKDTNLELSSKVMIELLGTYTADNACVAREDAMKCIVTALADPNTFLLDPLLSLKPVRFLEGDLIHDLLSIFVSEKLPAYVQFYEDHREFVNSQGLNHEQNMKKMRLLTFMQLAESSPEMTFETLTKELQINEDEVEPFVIEVLKTKLVRARLDQANQKVHISSTMHRTFGAPQWEQLRDLLQAWKENLSTVREGLTSVSSAQLDLARSQKLIH</sequence>
<protein>
    <recommendedName>
        <fullName evidence="1">Eukaryotic translation initiation factor 3 subunit M</fullName>
        <shortName evidence="1">eIF3m</shortName>
    </recommendedName>
    <alternativeName>
        <fullName evidence="1">Transport and Golgi organization protein 7</fullName>
        <shortName evidence="1">Tango-7</shortName>
    </alternativeName>
</protein>
<dbReference type="EMBL" id="AE013599">
    <property type="protein sequence ID" value="AAF58289.1"/>
    <property type="molecule type" value="Genomic_DNA"/>
</dbReference>
<dbReference type="EMBL" id="AY118924">
    <property type="protein sequence ID" value="AAM50784.1"/>
    <property type="molecule type" value="mRNA"/>
</dbReference>
<dbReference type="RefSeq" id="NP_001286407.1">
    <property type="nucleotide sequence ID" value="NM_001299478.1"/>
</dbReference>
<dbReference type="RefSeq" id="NP_610932.1">
    <property type="nucleotide sequence ID" value="NM_137088.4"/>
</dbReference>
<dbReference type="SMR" id="Q7JVI3"/>
<dbReference type="BioGRID" id="62316">
    <property type="interactions" value="30"/>
</dbReference>
<dbReference type="FunCoup" id="Q7JVI3">
    <property type="interactions" value="2342"/>
</dbReference>
<dbReference type="IntAct" id="Q7JVI3">
    <property type="interactions" value="20"/>
</dbReference>
<dbReference type="MINT" id="Q7JVI3"/>
<dbReference type="STRING" id="7227.FBpp0086705"/>
<dbReference type="PaxDb" id="7227-FBpp0086705"/>
<dbReference type="DNASU" id="36565"/>
<dbReference type="EnsemblMetazoa" id="FBtr0087579">
    <property type="protein sequence ID" value="FBpp0086705"/>
    <property type="gene ID" value="FBgn0033902"/>
</dbReference>
<dbReference type="EnsemblMetazoa" id="FBtr0339964">
    <property type="protein sequence ID" value="FBpp0308985"/>
    <property type="gene ID" value="FBgn0033902"/>
</dbReference>
<dbReference type="GeneID" id="36565"/>
<dbReference type="KEGG" id="dme:Dmel_CG8309"/>
<dbReference type="AGR" id="FB:FBgn0033902"/>
<dbReference type="CTD" id="10480"/>
<dbReference type="FlyBase" id="FBgn0033902">
    <property type="gene designation" value="eIF3m"/>
</dbReference>
<dbReference type="VEuPathDB" id="VectorBase:FBgn0033902"/>
<dbReference type="eggNOG" id="KOG2753">
    <property type="taxonomic scope" value="Eukaryota"/>
</dbReference>
<dbReference type="GeneTree" id="ENSGT00390000004456"/>
<dbReference type="HOGENOM" id="CLU_035254_1_0_1"/>
<dbReference type="InParanoid" id="Q7JVI3"/>
<dbReference type="OMA" id="VCLKALW"/>
<dbReference type="OrthoDB" id="7900529at2759"/>
<dbReference type="PhylomeDB" id="Q7JVI3"/>
<dbReference type="Reactome" id="R-DME-156827">
    <property type="pathway name" value="L13a-mediated translational silencing of Ceruloplasmin expression"/>
</dbReference>
<dbReference type="Reactome" id="R-DME-72649">
    <property type="pathway name" value="Translation initiation complex formation"/>
</dbReference>
<dbReference type="Reactome" id="R-DME-72689">
    <property type="pathway name" value="Formation of a pool of free 40S subunits"/>
</dbReference>
<dbReference type="Reactome" id="R-DME-72695">
    <property type="pathway name" value="Formation of the ternary complex, and subsequently, the 43S complex"/>
</dbReference>
<dbReference type="Reactome" id="R-DME-72702">
    <property type="pathway name" value="Ribosomal scanning and start codon recognition"/>
</dbReference>
<dbReference type="SignaLink" id="Q7JVI3"/>
<dbReference type="BioGRID-ORCS" id="36565">
    <property type="hits" value="0 hits in 1 CRISPR screen"/>
</dbReference>
<dbReference type="GenomeRNAi" id="36565"/>
<dbReference type="PRO" id="PR:Q7JVI3"/>
<dbReference type="Proteomes" id="UP000000803">
    <property type="component" value="Chromosome 2R"/>
</dbReference>
<dbReference type="Bgee" id="FBgn0033902">
    <property type="expression patterns" value="Expressed in adult enteroendocrine precursor cell in adult midgut (Drosophila) and 274 other cell types or tissues"/>
</dbReference>
<dbReference type="ExpressionAtlas" id="Q7JVI3">
    <property type="expression patterns" value="baseline and differential"/>
</dbReference>
<dbReference type="GO" id="GO:0005829">
    <property type="term" value="C:cytosol"/>
    <property type="evidence" value="ECO:0000314"/>
    <property type="project" value="FlyBase"/>
</dbReference>
<dbReference type="GO" id="GO:0016282">
    <property type="term" value="C:eukaryotic 43S preinitiation complex"/>
    <property type="evidence" value="ECO:0007669"/>
    <property type="project" value="UniProtKB-UniRule"/>
</dbReference>
<dbReference type="GO" id="GO:0033290">
    <property type="term" value="C:eukaryotic 48S preinitiation complex"/>
    <property type="evidence" value="ECO:0007669"/>
    <property type="project" value="UniProtKB-UniRule"/>
</dbReference>
<dbReference type="GO" id="GO:0005852">
    <property type="term" value="C:eukaryotic translation initiation factor 3 complex"/>
    <property type="evidence" value="ECO:0000250"/>
    <property type="project" value="FlyBase"/>
</dbReference>
<dbReference type="GO" id="GO:0071541">
    <property type="term" value="C:eukaryotic translation initiation factor 3 complex, eIF3m"/>
    <property type="evidence" value="ECO:0007669"/>
    <property type="project" value="UniProtKB-UniRule"/>
</dbReference>
<dbReference type="GO" id="GO:0005794">
    <property type="term" value="C:Golgi apparatus"/>
    <property type="evidence" value="ECO:0000314"/>
    <property type="project" value="UniProtKB"/>
</dbReference>
<dbReference type="GO" id="GO:0070865">
    <property type="term" value="C:investment cone"/>
    <property type="evidence" value="ECO:0000314"/>
    <property type="project" value="FlyBase"/>
</dbReference>
<dbReference type="GO" id="GO:0089720">
    <property type="term" value="F:caspase binding"/>
    <property type="evidence" value="ECO:0000353"/>
    <property type="project" value="FlyBase"/>
</dbReference>
<dbReference type="GO" id="GO:0140608">
    <property type="term" value="F:cysteine-type endopeptidase activator activity"/>
    <property type="evidence" value="ECO:0000314"/>
    <property type="project" value="FlyBase"/>
</dbReference>
<dbReference type="GO" id="GO:0003743">
    <property type="term" value="F:translation initiation factor activity"/>
    <property type="evidence" value="ECO:0007669"/>
    <property type="project" value="UniProtKB-UniRule"/>
</dbReference>
<dbReference type="GO" id="GO:0031369">
    <property type="term" value="F:translation initiation factor binding"/>
    <property type="evidence" value="ECO:0000250"/>
    <property type="project" value="FlyBase"/>
</dbReference>
<dbReference type="GO" id="GO:0002183">
    <property type="term" value="P:cytoplasmic translational initiation"/>
    <property type="evidence" value="ECO:0000318"/>
    <property type="project" value="GO_Central"/>
</dbReference>
<dbReference type="GO" id="GO:0001732">
    <property type="term" value="P:formation of cytoplasmic translation initiation complex"/>
    <property type="evidence" value="ECO:0007669"/>
    <property type="project" value="UniProtKB-UniRule"/>
</dbReference>
<dbReference type="GO" id="GO:0007030">
    <property type="term" value="P:Golgi organization"/>
    <property type="evidence" value="ECO:0000315"/>
    <property type="project" value="FlyBase"/>
</dbReference>
<dbReference type="GO" id="GO:0009306">
    <property type="term" value="P:protein secretion"/>
    <property type="evidence" value="ECO:0000315"/>
    <property type="project" value="UniProtKB"/>
</dbReference>
<dbReference type="GO" id="GO:0007291">
    <property type="term" value="P:sperm individualization"/>
    <property type="evidence" value="ECO:0000315"/>
    <property type="project" value="FlyBase"/>
</dbReference>
<dbReference type="GO" id="GO:0006412">
    <property type="term" value="P:translation"/>
    <property type="evidence" value="ECO:0000250"/>
    <property type="project" value="FlyBase"/>
</dbReference>
<dbReference type="HAMAP" id="MF_03012">
    <property type="entry name" value="eIF3m"/>
    <property type="match status" value="1"/>
</dbReference>
<dbReference type="InterPro" id="IPR045237">
    <property type="entry name" value="COPS7/eIF3m"/>
</dbReference>
<dbReference type="InterPro" id="IPR027528">
    <property type="entry name" value="eIF3m"/>
</dbReference>
<dbReference type="InterPro" id="IPR040750">
    <property type="entry name" value="eIF3m_C_helix"/>
</dbReference>
<dbReference type="InterPro" id="IPR000717">
    <property type="entry name" value="PCI_dom"/>
</dbReference>
<dbReference type="InterPro" id="IPR036390">
    <property type="entry name" value="WH_DNA-bd_sf"/>
</dbReference>
<dbReference type="PANTHER" id="PTHR15350">
    <property type="entry name" value="COP9 SIGNALOSOME COMPLEX SUBUNIT 7/DENDRITIC CELL PROTEIN GA17"/>
    <property type="match status" value="1"/>
</dbReference>
<dbReference type="PANTHER" id="PTHR15350:SF2">
    <property type="entry name" value="EUKARYOTIC TRANSLATION INITIATION FACTOR 3 SUBUNIT M"/>
    <property type="match status" value="1"/>
</dbReference>
<dbReference type="Pfam" id="PF18005">
    <property type="entry name" value="eIF3m_C_helix"/>
    <property type="match status" value="1"/>
</dbReference>
<dbReference type="Pfam" id="PF01399">
    <property type="entry name" value="PCI"/>
    <property type="match status" value="1"/>
</dbReference>
<dbReference type="SMART" id="SM00088">
    <property type="entry name" value="PINT"/>
    <property type="match status" value="1"/>
</dbReference>
<dbReference type="SUPFAM" id="SSF46785">
    <property type="entry name" value="Winged helix' DNA-binding domain"/>
    <property type="match status" value="1"/>
</dbReference>
<dbReference type="PROSITE" id="PS50250">
    <property type="entry name" value="PCI"/>
    <property type="match status" value="1"/>
</dbReference>
<organism>
    <name type="scientific">Drosophila melanogaster</name>
    <name type="common">Fruit fly</name>
    <dbReference type="NCBI Taxonomy" id="7227"/>
    <lineage>
        <taxon>Eukaryota</taxon>
        <taxon>Metazoa</taxon>
        <taxon>Ecdysozoa</taxon>
        <taxon>Arthropoda</taxon>
        <taxon>Hexapoda</taxon>
        <taxon>Insecta</taxon>
        <taxon>Pterygota</taxon>
        <taxon>Neoptera</taxon>
        <taxon>Endopterygota</taxon>
        <taxon>Diptera</taxon>
        <taxon>Brachycera</taxon>
        <taxon>Muscomorpha</taxon>
        <taxon>Ephydroidea</taxon>
        <taxon>Drosophilidae</taxon>
        <taxon>Drosophila</taxon>
        <taxon>Sophophora</taxon>
    </lineage>
</organism>
<proteinExistence type="evidence at protein level"/>
<reference key="1">
    <citation type="journal article" date="2000" name="Science">
        <title>The genome sequence of Drosophila melanogaster.</title>
        <authorList>
            <person name="Adams M.D."/>
            <person name="Celniker S.E."/>
            <person name="Holt R.A."/>
            <person name="Evans C.A."/>
            <person name="Gocayne J.D."/>
            <person name="Amanatides P.G."/>
            <person name="Scherer S.E."/>
            <person name="Li P.W."/>
            <person name="Hoskins R.A."/>
            <person name="Galle R.F."/>
            <person name="George R.A."/>
            <person name="Lewis S.E."/>
            <person name="Richards S."/>
            <person name="Ashburner M."/>
            <person name="Henderson S.N."/>
            <person name="Sutton G.G."/>
            <person name="Wortman J.R."/>
            <person name="Yandell M.D."/>
            <person name="Zhang Q."/>
            <person name="Chen L.X."/>
            <person name="Brandon R.C."/>
            <person name="Rogers Y.-H.C."/>
            <person name="Blazej R.G."/>
            <person name="Champe M."/>
            <person name="Pfeiffer B.D."/>
            <person name="Wan K.H."/>
            <person name="Doyle C."/>
            <person name="Baxter E.G."/>
            <person name="Helt G."/>
            <person name="Nelson C.R."/>
            <person name="Miklos G.L.G."/>
            <person name="Abril J.F."/>
            <person name="Agbayani A."/>
            <person name="An H.-J."/>
            <person name="Andrews-Pfannkoch C."/>
            <person name="Baldwin D."/>
            <person name="Ballew R.M."/>
            <person name="Basu A."/>
            <person name="Baxendale J."/>
            <person name="Bayraktaroglu L."/>
            <person name="Beasley E.M."/>
            <person name="Beeson K.Y."/>
            <person name="Benos P.V."/>
            <person name="Berman B.P."/>
            <person name="Bhandari D."/>
            <person name="Bolshakov S."/>
            <person name="Borkova D."/>
            <person name="Botchan M.R."/>
            <person name="Bouck J."/>
            <person name="Brokstein P."/>
            <person name="Brottier P."/>
            <person name="Burtis K.C."/>
            <person name="Busam D.A."/>
            <person name="Butler H."/>
            <person name="Cadieu E."/>
            <person name="Center A."/>
            <person name="Chandra I."/>
            <person name="Cherry J.M."/>
            <person name="Cawley S."/>
            <person name="Dahlke C."/>
            <person name="Davenport L.B."/>
            <person name="Davies P."/>
            <person name="de Pablos B."/>
            <person name="Delcher A."/>
            <person name="Deng Z."/>
            <person name="Mays A.D."/>
            <person name="Dew I."/>
            <person name="Dietz S.M."/>
            <person name="Dodson K."/>
            <person name="Doup L.E."/>
            <person name="Downes M."/>
            <person name="Dugan-Rocha S."/>
            <person name="Dunkov B.C."/>
            <person name="Dunn P."/>
            <person name="Durbin K.J."/>
            <person name="Evangelista C.C."/>
            <person name="Ferraz C."/>
            <person name="Ferriera S."/>
            <person name="Fleischmann W."/>
            <person name="Fosler C."/>
            <person name="Gabrielian A.E."/>
            <person name="Garg N.S."/>
            <person name="Gelbart W.M."/>
            <person name="Glasser K."/>
            <person name="Glodek A."/>
            <person name="Gong F."/>
            <person name="Gorrell J.H."/>
            <person name="Gu Z."/>
            <person name="Guan P."/>
            <person name="Harris M."/>
            <person name="Harris N.L."/>
            <person name="Harvey D.A."/>
            <person name="Heiman T.J."/>
            <person name="Hernandez J.R."/>
            <person name="Houck J."/>
            <person name="Hostin D."/>
            <person name="Houston K.A."/>
            <person name="Howland T.J."/>
            <person name="Wei M.-H."/>
            <person name="Ibegwam C."/>
            <person name="Jalali M."/>
            <person name="Kalush F."/>
            <person name="Karpen G.H."/>
            <person name="Ke Z."/>
            <person name="Kennison J.A."/>
            <person name="Ketchum K.A."/>
            <person name="Kimmel B.E."/>
            <person name="Kodira C.D."/>
            <person name="Kraft C.L."/>
            <person name="Kravitz S."/>
            <person name="Kulp D."/>
            <person name="Lai Z."/>
            <person name="Lasko P."/>
            <person name="Lei Y."/>
            <person name="Levitsky A.A."/>
            <person name="Li J.H."/>
            <person name="Li Z."/>
            <person name="Liang Y."/>
            <person name="Lin X."/>
            <person name="Liu X."/>
            <person name="Mattei B."/>
            <person name="McIntosh T.C."/>
            <person name="McLeod M.P."/>
            <person name="McPherson D."/>
            <person name="Merkulov G."/>
            <person name="Milshina N.V."/>
            <person name="Mobarry C."/>
            <person name="Morris J."/>
            <person name="Moshrefi A."/>
            <person name="Mount S.M."/>
            <person name="Moy M."/>
            <person name="Murphy B."/>
            <person name="Murphy L."/>
            <person name="Muzny D.M."/>
            <person name="Nelson D.L."/>
            <person name="Nelson D.R."/>
            <person name="Nelson K.A."/>
            <person name="Nixon K."/>
            <person name="Nusskern D.R."/>
            <person name="Pacleb J.M."/>
            <person name="Palazzolo M."/>
            <person name="Pittman G.S."/>
            <person name="Pan S."/>
            <person name="Pollard J."/>
            <person name="Puri V."/>
            <person name="Reese M.G."/>
            <person name="Reinert K."/>
            <person name="Remington K."/>
            <person name="Saunders R.D.C."/>
            <person name="Scheeler F."/>
            <person name="Shen H."/>
            <person name="Shue B.C."/>
            <person name="Siden-Kiamos I."/>
            <person name="Simpson M."/>
            <person name="Skupski M.P."/>
            <person name="Smith T.J."/>
            <person name="Spier E."/>
            <person name="Spradling A.C."/>
            <person name="Stapleton M."/>
            <person name="Strong R."/>
            <person name="Sun E."/>
            <person name="Svirskas R."/>
            <person name="Tector C."/>
            <person name="Turner R."/>
            <person name="Venter E."/>
            <person name="Wang A.H."/>
            <person name="Wang X."/>
            <person name="Wang Z.-Y."/>
            <person name="Wassarman D.A."/>
            <person name="Weinstock G.M."/>
            <person name="Weissenbach J."/>
            <person name="Williams S.M."/>
            <person name="Woodage T."/>
            <person name="Worley K.C."/>
            <person name="Wu D."/>
            <person name="Yang S."/>
            <person name="Yao Q.A."/>
            <person name="Ye J."/>
            <person name="Yeh R.-F."/>
            <person name="Zaveri J.S."/>
            <person name="Zhan M."/>
            <person name="Zhang G."/>
            <person name="Zhao Q."/>
            <person name="Zheng L."/>
            <person name="Zheng X.H."/>
            <person name="Zhong F.N."/>
            <person name="Zhong W."/>
            <person name="Zhou X."/>
            <person name="Zhu S.C."/>
            <person name="Zhu X."/>
            <person name="Smith H.O."/>
            <person name="Gibbs R.A."/>
            <person name="Myers E.W."/>
            <person name="Rubin G.M."/>
            <person name="Venter J.C."/>
        </authorList>
    </citation>
    <scope>NUCLEOTIDE SEQUENCE [LARGE SCALE GENOMIC DNA]</scope>
    <source>
        <strain>Berkeley</strain>
    </source>
</reference>
<reference key="2">
    <citation type="journal article" date="2002" name="Genome Biol.">
        <title>Annotation of the Drosophila melanogaster euchromatic genome: a systematic review.</title>
        <authorList>
            <person name="Misra S."/>
            <person name="Crosby M.A."/>
            <person name="Mungall C.J."/>
            <person name="Matthews B.B."/>
            <person name="Campbell K.S."/>
            <person name="Hradecky P."/>
            <person name="Huang Y."/>
            <person name="Kaminker J.S."/>
            <person name="Millburn G.H."/>
            <person name="Prochnik S.E."/>
            <person name="Smith C.D."/>
            <person name="Tupy J.L."/>
            <person name="Whitfield E.J."/>
            <person name="Bayraktaroglu L."/>
            <person name="Berman B.P."/>
            <person name="Bettencourt B.R."/>
            <person name="Celniker S.E."/>
            <person name="de Grey A.D.N.J."/>
            <person name="Drysdale R.A."/>
            <person name="Harris N.L."/>
            <person name="Richter J."/>
            <person name="Russo S."/>
            <person name="Schroeder A.J."/>
            <person name="Shu S.Q."/>
            <person name="Stapleton M."/>
            <person name="Yamada C."/>
            <person name="Ashburner M."/>
            <person name="Gelbart W.M."/>
            <person name="Rubin G.M."/>
            <person name="Lewis S.E."/>
        </authorList>
    </citation>
    <scope>GENOME REANNOTATION</scope>
    <source>
        <strain>Berkeley</strain>
    </source>
</reference>
<reference key="3">
    <citation type="journal article" date="2002" name="Genome Biol.">
        <title>A Drosophila full-length cDNA resource.</title>
        <authorList>
            <person name="Stapleton M."/>
            <person name="Carlson J.W."/>
            <person name="Brokstein P."/>
            <person name="Yu C."/>
            <person name="Champe M."/>
            <person name="George R.A."/>
            <person name="Guarin H."/>
            <person name="Kronmiller B."/>
            <person name="Pacleb J.M."/>
            <person name="Park S."/>
            <person name="Wan K.H."/>
            <person name="Rubin G.M."/>
            <person name="Celniker S.E."/>
        </authorList>
    </citation>
    <scope>NUCLEOTIDE SEQUENCE [LARGE SCALE MRNA]</scope>
    <source>
        <strain>Berkeley</strain>
        <tissue>Embryo</tissue>
    </source>
</reference>
<reference key="4">
    <citation type="journal article" date="2006" name="Nature">
        <title>Functional genomics reveals genes involved in protein secretion and Golgi organization.</title>
        <authorList>
            <person name="Bard F."/>
            <person name="Casano L."/>
            <person name="Mallabiabarrena A."/>
            <person name="Wallace E."/>
            <person name="Saito K."/>
            <person name="Kitayama H."/>
            <person name="Guizzunti G."/>
            <person name="Hu Y."/>
            <person name="Wendler F."/>
            <person name="Dasgupta R."/>
            <person name="Perrimon N."/>
            <person name="Malhotra V."/>
        </authorList>
    </citation>
    <scope>SUBCELLULAR LOCATION</scope>
</reference>
<reference key="5">
    <citation type="journal article" date="2007" name="Mol. Cell. Biol.">
        <title>CIF-1, a shared subunit of the COP9/signalosome and eukaryotic initiation factor 3 complexes, regulates MEL-26 levels in the Caenorhabditis elegans embryo.</title>
        <authorList>
            <person name="Luke-Glaser S."/>
            <person name="Roy M."/>
            <person name="Larsen B."/>
            <person name="Le Bihan T."/>
            <person name="Metalnikov P."/>
            <person name="Tyers M."/>
            <person name="Peter M."/>
            <person name="Pintard L."/>
        </authorList>
    </citation>
    <scope>IDENTIFICATION</scope>
</reference>
<comment type="function">
    <text evidence="1">Component of the eukaryotic translation initiation factor 3 (eIF-3) complex, which is involved in protein synthesis of a specialized repertoire of mRNAs and, together with other initiation factors, stimulates binding of mRNA and methionyl-tRNAi to the 40S ribosome. The eIF-3 complex specifically targets and initiates translation of a subset of mRNAs involved in cell proliferation (Potential).</text>
</comment>
<comment type="subunit">
    <text evidence="1">Component of the eukaryotic translation initiation factor 3 (eIF-3) complex. The eIF-3 complex interacts with pix.</text>
</comment>
<comment type="interaction">
    <interactant intactId="EBI-162173">
        <id>Q7JVI3</id>
    </interactant>
    <interactant intactId="EBI-87054">
        <id>Q9VN50</id>
        <label>eIF3f1</label>
    </interactant>
    <organismsDiffer>false</organismsDiffer>
    <experiments>3</experiments>
</comment>
<comment type="subcellular location">
    <subcellularLocation>
        <location evidence="1 3">Cytoplasm</location>
    </subcellularLocation>
    <subcellularLocation>
        <location evidence="1 3">Golgi apparatus</location>
    </subcellularLocation>
</comment>
<comment type="similarity">
    <text evidence="1">Belongs to the eIF-3 subunit M family.</text>
</comment>
<accession>Q7JVI3</accession>
<name>EIF3M_DROME</name>